<sequence length="126" mass="15057">MELPLLDKLKVRDLVDKRFSHLFETVSLLSGDNEEDNEDQLRLKNSIKNLREHLTEKEEEIRQLHDVISVKNRDAERLNDELISINIENNLLQERLTHIQAEYDTLIERWLLKAQREADIMNTRLK</sequence>
<dbReference type="EMBL" id="CR382125">
    <property type="protein sequence ID" value="CAG99104.1"/>
    <property type="molecule type" value="Genomic_DNA"/>
</dbReference>
<dbReference type="RefSeq" id="XP_454017.1">
    <property type="nucleotide sequence ID" value="XM_454017.1"/>
</dbReference>
<dbReference type="SMR" id="Q6CPX2"/>
<dbReference type="STRING" id="284590.Q6CPX2"/>
<dbReference type="PaxDb" id="284590-Q6CPX2"/>
<dbReference type="KEGG" id="kla:KLLA0_E01541g"/>
<dbReference type="eggNOG" id="ENOG502S6TV">
    <property type="taxonomic scope" value="Eukaryota"/>
</dbReference>
<dbReference type="HOGENOM" id="CLU_158825_0_0_1"/>
<dbReference type="InParanoid" id="Q6CPX2"/>
<dbReference type="OMA" id="QLRNKDY"/>
<dbReference type="Proteomes" id="UP000000598">
    <property type="component" value="Chromosome E"/>
</dbReference>
<dbReference type="GO" id="GO:0034045">
    <property type="term" value="C:phagophore assembly site membrane"/>
    <property type="evidence" value="ECO:0007669"/>
    <property type="project" value="UniProtKB-SubCell"/>
</dbReference>
<dbReference type="GO" id="GO:0006914">
    <property type="term" value="P:autophagy"/>
    <property type="evidence" value="ECO:0007669"/>
    <property type="project" value="UniProtKB-KW"/>
</dbReference>
<dbReference type="GO" id="GO:0015031">
    <property type="term" value="P:protein transport"/>
    <property type="evidence" value="ECO:0007669"/>
    <property type="project" value="UniProtKB-KW"/>
</dbReference>
<dbReference type="CDD" id="cd22887">
    <property type="entry name" value="Atg16_CCD"/>
    <property type="match status" value="1"/>
</dbReference>
<dbReference type="Gene3D" id="1.20.5.170">
    <property type="match status" value="1"/>
</dbReference>
<dbReference type="InterPro" id="IPR013923">
    <property type="entry name" value="Autophagy-rel_prot_16_dom"/>
</dbReference>
<dbReference type="Pfam" id="PF08614">
    <property type="entry name" value="ATG16"/>
    <property type="match status" value="1"/>
</dbReference>
<accession>Q6CPX2</accession>
<protein>
    <recommendedName>
        <fullName>Autophagy protein 16</fullName>
    </recommendedName>
</protein>
<name>ATG16_KLULA</name>
<organism>
    <name type="scientific">Kluyveromyces lactis (strain ATCC 8585 / CBS 2359 / DSM 70799 / NBRC 1267 / NRRL Y-1140 / WM37)</name>
    <name type="common">Yeast</name>
    <name type="synonym">Candida sphaerica</name>
    <dbReference type="NCBI Taxonomy" id="284590"/>
    <lineage>
        <taxon>Eukaryota</taxon>
        <taxon>Fungi</taxon>
        <taxon>Dikarya</taxon>
        <taxon>Ascomycota</taxon>
        <taxon>Saccharomycotina</taxon>
        <taxon>Saccharomycetes</taxon>
        <taxon>Saccharomycetales</taxon>
        <taxon>Saccharomycetaceae</taxon>
        <taxon>Kluyveromyces</taxon>
    </lineage>
</organism>
<keyword id="KW-0072">Autophagy</keyword>
<keyword id="KW-0175">Coiled coil</keyword>
<keyword id="KW-0472">Membrane</keyword>
<keyword id="KW-0653">Protein transport</keyword>
<keyword id="KW-1185">Reference proteome</keyword>
<keyword id="KW-0813">Transport</keyword>
<feature type="chain" id="PRO_0000218592" description="Autophagy protein 16">
    <location>
        <begin position="1"/>
        <end position="126"/>
    </location>
</feature>
<feature type="coiled-coil region" evidence="3">
    <location>
        <begin position="32"/>
        <end position="109"/>
    </location>
</feature>
<proteinExistence type="inferred from homology"/>
<evidence type="ECO:0000250" key="1"/>
<evidence type="ECO:0000250" key="2">
    <source>
        <dbReference type="UniProtKB" id="Q03818"/>
    </source>
</evidence>
<evidence type="ECO:0000255" key="3"/>
<evidence type="ECO:0000305" key="4"/>
<gene>
    <name type="primary">ATG16</name>
    <name type="ordered locus">KLLA0E01540g</name>
</gene>
<reference key="1">
    <citation type="journal article" date="2004" name="Nature">
        <title>Genome evolution in yeasts.</title>
        <authorList>
            <person name="Dujon B."/>
            <person name="Sherman D."/>
            <person name="Fischer G."/>
            <person name="Durrens P."/>
            <person name="Casaregola S."/>
            <person name="Lafontaine I."/>
            <person name="de Montigny J."/>
            <person name="Marck C."/>
            <person name="Neuveglise C."/>
            <person name="Talla E."/>
            <person name="Goffard N."/>
            <person name="Frangeul L."/>
            <person name="Aigle M."/>
            <person name="Anthouard V."/>
            <person name="Babour A."/>
            <person name="Barbe V."/>
            <person name="Barnay S."/>
            <person name="Blanchin S."/>
            <person name="Beckerich J.-M."/>
            <person name="Beyne E."/>
            <person name="Bleykasten C."/>
            <person name="Boisrame A."/>
            <person name="Boyer J."/>
            <person name="Cattolico L."/>
            <person name="Confanioleri F."/>
            <person name="de Daruvar A."/>
            <person name="Despons L."/>
            <person name="Fabre E."/>
            <person name="Fairhead C."/>
            <person name="Ferry-Dumazet H."/>
            <person name="Groppi A."/>
            <person name="Hantraye F."/>
            <person name="Hennequin C."/>
            <person name="Jauniaux N."/>
            <person name="Joyet P."/>
            <person name="Kachouri R."/>
            <person name="Kerrest A."/>
            <person name="Koszul R."/>
            <person name="Lemaire M."/>
            <person name="Lesur I."/>
            <person name="Ma L."/>
            <person name="Muller H."/>
            <person name="Nicaud J.-M."/>
            <person name="Nikolski M."/>
            <person name="Oztas S."/>
            <person name="Ozier-Kalogeropoulos O."/>
            <person name="Pellenz S."/>
            <person name="Potier S."/>
            <person name="Richard G.-F."/>
            <person name="Straub M.-L."/>
            <person name="Suleau A."/>
            <person name="Swennen D."/>
            <person name="Tekaia F."/>
            <person name="Wesolowski-Louvel M."/>
            <person name="Westhof E."/>
            <person name="Wirth B."/>
            <person name="Zeniou-Meyer M."/>
            <person name="Zivanovic Y."/>
            <person name="Bolotin-Fukuhara M."/>
            <person name="Thierry A."/>
            <person name="Bouchier C."/>
            <person name="Caudron B."/>
            <person name="Scarpelli C."/>
            <person name="Gaillardin C."/>
            <person name="Weissenbach J."/>
            <person name="Wincker P."/>
            <person name="Souciet J.-L."/>
        </authorList>
    </citation>
    <scope>NUCLEOTIDE SEQUENCE [LARGE SCALE GENOMIC DNA]</scope>
    <source>
        <strain>ATCC 8585 / CBS 2359 / DSM 70799 / NBRC 1267 / NRRL Y-1140 / WM37</strain>
    </source>
</reference>
<comment type="function">
    <text evidence="1">Stabilizes the ATG5-ATG12 conjugate which is necessary for autophagy. The ATG5-ATG12/ATG16 complex is required for efficient promotion of ATG8-conjugation to phosphatidylethanolamine and ATG8 localization to the pre-autophagosomal structure (PAS). Also recruits ATG3 to the PAS. Involved in endoplasmic reticulum-specific autophagic process and is essential for the survival of cells subjected to severe ER stress (By similarity).</text>
</comment>
<comment type="subunit">
    <text evidence="1">Homodimer (By similarity). Part of the ATG5-ATG12/ATG16 complex. Several units of each may be present in this complex (By similarity).</text>
</comment>
<comment type="subcellular location">
    <subcellularLocation>
        <location evidence="2">Preautophagosomal structure membrane</location>
        <topology evidence="2">Peripheral membrane protein</topology>
    </subcellularLocation>
</comment>
<comment type="similarity">
    <text evidence="4">Belongs to the ATG16 family.</text>
</comment>